<reference key="1">
    <citation type="journal article" date="1999" name="Plant Cell">
        <title>IFL1, a gene regulating interfascicular fiber differentiation in Arabidopsis, encodes a homeodomain-leucine zipper protein.</title>
        <authorList>
            <person name="Zhong R."/>
            <person name="Ye Z.-H."/>
        </authorList>
    </citation>
    <scope>NUCLEOTIDE SEQUENCE [GENOMIC DNA / MRNA]</scope>
    <scope>FUNCTION</scope>
    <scope>SUBCELLULAR LOCATION</scope>
    <scope>TISSUE SPECIFICITY</scope>
    <source>
        <strain>cv. Columbia</strain>
    </source>
</reference>
<reference key="2">
    <citation type="journal article" date="2000" name="Plant Cell">
        <title>INTERFASCICULAR FIBERLESS1 is the same gene as REVOLUTA.</title>
        <authorList>
            <person name="Ratcliffe O.J."/>
            <person name="Riechmann J.L."/>
            <person name="Zhang J.Z."/>
        </authorList>
    </citation>
    <scope>NUCLEOTIDE SEQUENCE [MRNA]</scope>
    <source>
        <strain>cv. Columbia</strain>
    </source>
</reference>
<reference key="3">
    <citation type="journal article" date="1997" name="DNA Res.">
        <title>Structural analysis of Arabidopsis thaliana chromosome 5. I. Sequence features of the 1.6 Mb regions covered by twenty physically assigned P1 clones.</title>
        <authorList>
            <person name="Sato S."/>
            <person name="Kotani H."/>
            <person name="Nakamura Y."/>
            <person name="Kaneko T."/>
            <person name="Asamizu E."/>
            <person name="Fukami M."/>
            <person name="Miyajima N."/>
            <person name="Tabata S."/>
        </authorList>
    </citation>
    <scope>NUCLEOTIDE SEQUENCE [LARGE SCALE GENOMIC DNA]</scope>
    <source>
        <strain>cv. Columbia</strain>
    </source>
</reference>
<reference key="4">
    <citation type="journal article" date="2017" name="Plant J.">
        <title>Araport11: a complete reannotation of the Arabidopsis thaliana reference genome.</title>
        <authorList>
            <person name="Cheng C.Y."/>
            <person name="Krishnakumar V."/>
            <person name="Chan A.P."/>
            <person name="Thibaud-Nissen F."/>
            <person name="Schobel S."/>
            <person name="Town C.D."/>
        </authorList>
    </citation>
    <scope>GENOME REANNOTATION</scope>
    <source>
        <strain>cv. Columbia</strain>
    </source>
</reference>
<reference key="5">
    <citation type="submission" date="2006-07" db="EMBL/GenBank/DDBJ databases">
        <title>Large-scale analysis of RIKEN Arabidopsis full-length (RAFL) cDNAs.</title>
        <authorList>
            <person name="Totoki Y."/>
            <person name="Seki M."/>
            <person name="Ishida J."/>
            <person name="Nakajima M."/>
            <person name="Enju A."/>
            <person name="Kamiya A."/>
            <person name="Narusaka M."/>
            <person name="Shin-i T."/>
            <person name="Nakagawa M."/>
            <person name="Sakamoto N."/>
            <person name="Oishi K."/>
            <person name="Kohara Y."/>
            <person name="Kobayashi M."/>
            <person name="Toyoda A."/>
            <person name="Sakaki Y."/>
            <person name="Sakurai T."/>
            <person name="Iida K."/>
            <person name="Akiyama K."/>
            <person name="Satou M."/>
            <person name="Toyoda T."/>
            <person name="Konagaya A."/>
            <person name="Carninci P."/>
            <person name="Kawai J."/>
            <person name="Hayashizaki Y."/>
            <person name="Shinozaki K."/>
        </authorList>
    </citation>
    <scope>NUCLEOTIDE SEQUENCE [LARGE SCALE MRNA]</scope>
    <source>
        <strain>cv. Columbia</strain>
    </source>
</reference>
<reference key="6">
    <citation type="journal article" date="2007" name="Genetics">
        <title>The genetic architecture of shoot branching in Arabidopsis thaliana: a comparative assessment of candidate gene associations vs. quantitative trait locus mapping.</title>
        <authorList>
            <person name="Ehrenreich I.M."/>
            <person name="Stafford P.A."/>
            <person name="Purugganan M.D."/>
        </authorList>
    </citation>
    <scope>NUCLEOTIDE SEQUENCE [GENOMIC DNA] OF 498-653</scope>
    <scope>VARIANTS 624-SER-PHE-625 DELINS THR-SER; SER-625; 625-PHE--SER-627 DELINS SER-SER-ILE AND LEU-630</scope>
    <source>
        <strain>cv. Ag-0</strain>
        <strain>cv. An-1</strain>
        <strain>cv. Br-0</strain>
        <strain>cv. C24</strain>
        <strain>cv. Ct-1</strain>
        <strain>cv. Edi-0</strain>
        <strain>cv. Ga-0</strain>
        <strain>cv. Kas-1</strain>
        <strain>cv. Kin-0</strain>
        <strain>cv. Landsberg erecta</strain>
        <strain>cv. Ll-0</strain>
        <strain>cv. Lz-0</strain>
        <strain>cv. Ms-0</strain>
        <strain>cv. Mt-0</strain>
        <strain>cv. Nd-1</strain>
        <strain>cv. Nok-3</strain>
        <strain>cv. Oy-0</strain>
        <strain>cv. Se-0</strain>
        <strain>cv. Sorbo</strain>
        <strain>cv. Tsu-1</strain>
        <strain>cv. Van-0</strain>
        <strain>cv. Wa-1</strain>
        <strain>cv. Wassilewskija</strain>
    </source>
</reference>
<reference key="7">
    <citation type="journal article" date="1995" name="Development">
        <title>The REVOLUTA gene is necessary for apical meristem development and for limiting cell divisions in the leaves and stems of Arabidopsis thaliana.</title>
        <authorList>
            <person name="Talbert P.B."/>
            <person name="Adler H.T."/>
            <person name="Parks D.W."/>
            <person name="Comai L."/>
        </authorList>
    </citation>
    <scope>FUNCTION</scope>
</reference>
<reference key="8">
    <citation type="journal article" date="2001" name="Plant J.">
        <title>REVOLUTA regulates meristem initiation at lateral positions.</title>
        <authorList>
            <person name="Otsuga D."/>
            <person name="DeGuzman B."/>
            <person name="Prigge M.J."/>
            <person name="Drews G.N."/>
            <person name="Clark S.E."/>
        </authorList>
    </citation>
    <scope>FUNCTION</scope>
    <scope>DEVELOPMENTAL STAGE</scope>
    <scope>MUTANT REVOLUTA</scope>
</reference>
<reference key="9">
    <citation type="journal article" date="2001" name="Plant Physiol.">
        <title>Alteration of auxin polar transport in the Arabidopsis ifl1 mutants.</title>
        <authorList>
            <person name="Zhong R."/>
            <person name="Ye Z.-H."/>
        </authorList>
    </citation>
    <scope>FUNCTION</scope>
    <scope>DISRUPTION PHENOTYPE</scope>
</reference>
<reference key="10">
    <citation type="journal article" date="2004" name="Plant Cell Physiol.">
        <title>Amphivasal vascular bundle 1, a gain-of-function mutation of the IFL1/REV gene, is associated with alterations in the polarity of leaves, stems and carpels.</title>
        <authorList>
            <person name="Zhong R."/>
            <person name="Ye Z.-H."/>
        </authorList>
    </citation>
    <scope>FUNCTION</scope>
    <scope>INDUCTION</scope>
    <scope>MUTAGENESIS OF PRO-190</scope>
</reference>
<reference key="11">
    <citation type="journal article" date="2005" name="Plant Cell">
        <title>Class III homeodomain-leucine zipper gene family members have overlapping, antagonistic, and distinct roles in Arabidopsis development.</title>
        <authorList>
            <person name="Prigge M.J."/>
            <person name="Otsuga D."/>
            <person name="Alonso J.M."/>
            <person name="Ecker J.R."/>
            <person name="Drews G.N."/>
            <person name="Clark S.E."/>
        </authorList>
    </citation>
    <scope>FUNCTION</scope>
</reference>
<reference key="12">
    <citation type="journal article" date="2006" name="Evol. Dev.">
        <title>Evolution of the class III HD-Zip gene family in land plants.</title>
        <authorList>
            <person name="Prigge M.J."/>
            <person name="Clark S.E."/>
        </authorList>
    </citation>
    <scope>GENE FAMILY</scope>
</reference>
<reference key="13">
    <citation type="journal article" date="2007" name="Development">
        <title>The AP2 transcription factors DORNROSCHEN and DORNROSCHEN-LIKE redundantly control Arabidopsis embryo patterning via interaction with PHAVOLUTA.</title>
        <authorList>
            <person name="Chandler J.W."/>
            <person name="Cole M."/>
            <person name="Flier A."/>
            <person name="Grewe B."/>
            <person name="Werr W."/>
        </authorList>
    </citation>
    <scope>INTERACTION WITH ESR1 AND ESR2</scope>
</reference>
<reference key="14">
    <citation type="journal article" date="2007" name="Plant Cell Physiol.">
        <title>Overexpression of miR165 affects apical meristem formation, organ polarity establishment and vascular development in Arabidopsis.</title>
        <authorList>
            <person name="Zhou G.-K."/>
            <person name="Kubo M."/>
            <person name="Zhong R."/>
            <person name="Demura T."/>
            <person name="Ye Z.-H."/>
        </authorList>
    </citation>
    <scope>INDUCTION</scope>
</reference>
<reference key="15">
    <citation type="journal article" date="2007" name="Plant Cell">
        <title>A feedback regulatory module formed by LITTLE ZIPPER and HD-ZIPIII genes.</title>
        <authorList>
            <person name="Wenkel S."/>
            <person name="Emery J."/>
            <person name="Hou B.H."/>
            <person name="Evans M.M."/>
            <person name="Barton M.K."/>
        </authorList>
    </citation>
    <scope>INTERACTION WITH ZPR1; ZPR2; ZPR3 AND ZPR4</scope>
</reference>
<reference key="16">
    <citation type="journal article" date="2008" name="Plant Cell">
        <title>HD-ZIP III activity is modulated by competitive inhibitors via a feedback loop in Arabidopsis shoot apical meristem development.</title>
        <authorList>
            <person name="Kim Y.S."/>
            <person name="Kim S.G."/>
            <person name="Lee M."/>
            <person name="Lee I."/>
            <person name="Park H.Y."/>
            <person name="Seo P.J."/>
            <person name="Jung J.H."/>
            <person name="Kwon E.J."/>
            <person name="Suh S.W."/>
            <person name="Paek K.H."/>
            <person name="Park C.M."/>
        </authorList>
    </citation>
    <scope>INTERACTION WITH ZPR3</scope>
</reference>
<reference key="17">
    <citation type="journal article" date="2010" name="Plant J.">
        <title>The DOF transcription factor Dof5.1 influences leaf axial patterning by promoting Revoluta transcription in Arabidopsis.</title>
        <authorList>
            <person name="Kim H.-S."/>
            <person name="Kim S.J."/>
            <person name="Abbasi N."/>
            <person name="Bressan R.A."/>
            <person name="Yun D.-J."/>
            <person name="Yoo S.-D."/>
            <person name="Kwon S.-Y."/>
            <person name="Choi S.-B."/>
        </authorList>
    </citation>
    <scope>FUNCTION</scope>
    <scope>DISRUPTION PHENOTYPE</scope>
    <scope>INDUCTION BY DOF5.1</scope>
    <source>
        <strain>cv. C24</strain>
        <strain>cv. Columbia</strain>
    </source>
</reference>
<reference key="18">
    <citation type="journal article" date="2013" name="Mech. Dev.">
        <title>Control of stem cell homeostasis via interlocking microRNA and microProtein feedback loops.</title>
        <authorList>
            <person name="Brandt R."/>
            <person name="Xie Y."/>
            <person name="Musielak T."/>
            <person name="Graeff M."/>
            <person name="Stierhof Y.D."/>
            <person name="Huang H."/>
            <person name="Liu C.M."/>
            <person name="Wenkel S."/>
        </authorList>
    </citation>
    <scope>FUNCTION</scope>
</reference>
<reference key="19">
    <citation type="journal article" date="2014" name="Mol. Phylogenet. Evol.">
        <title>Origin of a novel regulatory module by duplication and degeneration of an ancient plant transcription factor.</title>
        <authorList>
            <person name="Floyd S.K."/>
            <person name="Ryan J.G."/>
            <person name="Conway S.J."/>
            <person name="Brenner E."/>
            <person name="Burris K.P."/>
            <person name="Burris J.N."/>
            <person name="Chen T."/>
            <person name="Edger P.P."/>
            <person name="Graham S.W."/>
            <person name="Leebens-Mack J.H."/>
            <person name="Pires J.C."/>
            <person name="Rothfels C.J."/>
            <person name="Sigel E.M."/>
            <person name="Stevenson D.W."/>
            <person name="Neal Stewart C. Jr."/>
            <person name="Wong G.K."/>
            <person name="Bowman J.L."/>
        </authorList>
    </citation>
    <scope>GENE FAMILY</scope>
</reference>
<accession>Q9SE43</accession>
<accession>A5YZA2</accession>
<accession>A5YZA3</accession>
<accession>A5YZA4</accession>
<accession>A5YZA7</accession>
<accession>A5YZC3</accession>
<accession>Q9M5B6</accession>
<proteinExistence type="evidence at protein level"/>
<evidence type="ECO:0000255" key="1"/>
<evidence type="ECO:0000255" key="2">
    <source>
        <dbReference type="PROSITE-ProRule" id="PRU00108"/>
    </source>
</evidence>
<evidence type="ECO:0000255" key="3">
    <source>
        <dbReference type="PROSITE-ProRule" id="PRU00197"/>
    </source>
</evidence>
<evidence type="ECO:0000256" key="4">
    <source>
        <dbReference type="SAM" id="MobiDB-lite"/>
    </source>
</evidence>
<evidence type="ECO:0000269" key="5">
    <source>
    </source>
</evidence>
<evidence type="ECO:0000269" key="6">
    <source>
    </source>
</evidence>
<evidence type="ECO:0000269" key="7">
    <source>
    </source>
</evidence>
<evidence type="ECO:0000269" key="8">
    <source>
    </source>
</evidence>
<evidence type="ECO:0000269" key="9">
    <source>
    </source>
</evidence>
<evidence type="ECO:0000269" key="10">
    <source>
    </source>
</evidence>
<evidence type="ECO:0000269" key="11">
    <source>
    </source>
</evidence>
<evidence type="ECO:0000269" key="12">
    <source>
    </source>
</evidence>
<evidence type="ECO:0000269" key="13">
    <source>
    </source>
</evidence>
<evidence type="ECO:0000269" key="14">
    <source>
    </source>
</evidence>
<evidence type="ECO:0000269" key="15">
    <source>
    </source>
</evidence>
<evidence type="ECO:0000269" key="16">
    <source>
    </source>
</evidence>
<evidence type="ECO:0000269" key="17">
    <source>
    </source>
</evidence>
<evidence type="ECO:0000303" key="18">
    <source>
    </source>
</evidence>
<evidence type="ECO:0000303" key="19">
    <source>
    </source>
</evidence>
<evidence type="ECO:0000303" key="20">
    <source>
    </source>
</evidence>
<evidence type="ECO:0000305" key="21"/>
<evidence type="ECO:0000305" key="22">
    <source>
    </source>
</evidence>
<evidence type="ECO:0000312" key="23">
    <source>
        <dbReference type="Araport" id="AT5G60690"/>
    </source>
</evidence>
<evidence type="ECO:0000312" key="24">
    <source>
        <dbReference type="EMBL" id="BAB09842.1"/>
    </source>
</evidence>
<gene>
    <name evidence="20" type="primary">REV</name>
    <name evidence="19" type="synonym">AVB1</name>
    <name evidence="18" type="synonym">IFL1</name>
    <name evidence="23" type="ordered locus">At5g60690</name>
    <name evidence="24" type="ORF">MUP24.16</name>
</gene>
<keyword id="KW-0175">Coiled coil</keyword>
<keyword id="KW-0221">Differentiation</keyword>
<keyword id="KW-0238">DNA-binding</keyword>
<keyword id="KW-0371">Homeobox</keyword>
<keyword id="KW-0539">Nucleus</keyword>
<keyword id="KW-1185">Reference proteome</keyword>
<keyword id="KW-0804">Transcription</keyword>
<keyword id="KW-0805">Transcription regulation</keyword>
<dbReference type="EMBL" id="AF188994">
    <property type="protein sequence ID" value="AAF15262.2"/>
    <property type="molecule type" value="mRNA"/>
</dbReference>
<dbReference type="EMBL" id="AY170127">
    <property type="protein sequence ID" value="AAO11835.1"/>
    <property type="molecule type" value="Genomic_DNA"/>
</dbReference>
<dbReference type="EMBL" id="AF233592">
    <property type="protein sequence ID" value="AAF42938.1"/>
    <property type="molecule type" value="mRNA"/>
</dbReference>
<dbReference type="EMBL" id="AB005246">
    <property type="protein sequence ID" value="BAB09842.1"/>
    <property type="molecule type" value="Genomic_DNA"/>
</dbReference>
<dbReference type="EMBL" id="CP002688">
    <property type="protein sequence ID" value="AED97367.1"/>
    <property type="molecule type" value="Genomic_DNA"/>
</dbReference>
<dbReference type="EMBL" id="AK229564">
    <property type="protein sequence ID" value="BAF01416.1"/>
    <property type="molecule type" value="mRNA"/>
</dbReference>
<dbReference type="EMBL" id="EF598684">
    <property type="protein sequence ID" value="ABR09120.1"/>
    <property type="molecule type" value="Genomic_DNA"/>
</dbReference>
<dbReference type="EMBL" id="EF598685">
    <property type="protein sequence ID" value="ABR09121.1"/>
    <property type="molecule type" value="Genomic_DNA"/>
</dbReference>
<dbReference type="EMBL" id="EF598686">
    <property type="protein sequence ID" value="ABR09122.1"/>
    <property type="molecule type" value="Genomic_DNA"/>
</dbReference>
<dbReference type="EMBL" id="EF598687">
    <property type="protein sequence ID" value="ABR09123.1"/>
    <property type="molecule type" value="Genomic_DNA"/>
</dbReference>
<dbReference type="EMBL" id="EF598688">
    <property type="protein sequence ID" value="ABR09124.1"/>
    <property type="molecule type" value="Genomic_DNA"/>
</dbReference>
<dbReference type="EMBL" id="EF598689">
    <property type="protein sequence ID" value="ABR09125.1"/>
    <property type="molecule type" value="Genomic_DNA"/>
</dbReference>
<dbReference type="EMBL" id="EF598690">
    <property type="protein sequence ID" value="ABR09126.1"/>
    <property type="molecule type" value="Genomic_DNA"/>
</dbReference>
<dbReference type="EMBL" id="EF598691">
    <property type="protein sequence ID" value="ABR09127.1"/>
    <property type="molecule type" value="Genomic_DNA"/>
</dbReference>
<dbReference type="EMBL" id="EF598692">
    <property type="protein sequence ID" value="ABR09128.1"/>
    <property type="molecule type" value="Genomic_DNA"/>
</dbReference>
<dbReference type="EMBL" id="EF598693">
    <property type="protein sequence ID" value="ABR09129.1"/>
    <property type="molecule type" value="Genomic_DNA"/>
</dbReference>
<dbReference type="EMBL" id="EF598694">
    <property type="protein sequence ID" value="ABR09130.1"/>
    <property type="molecule type" value="Genomic_DNA"/>
</dbReference>
<dbReference type="EMBL" id="EF598695">
    <property type="protein sequence ID" value="ABR09131.1"/>
    <property type="molecule type" value="Genomic_DNA"/>
</dbReference>
<dbReference type="EMBL" id="EF598696">
    <property type="protein sequence ID" value="ABR09132.1"/>
    <property type="molecule type" value="Genomic_DNA"/>
</dbReference>
<dbReference type="EMBL" id="EF598697">
    <property type="protein sequence ID" value="ABR09133.1"/>
    <property type="molecule type" value="Genomic_DNA"/>
</dbReference>
<dbReference type="EMBL" id="EF598698">
    <property type="protein sequence ID" value="ABR09134.1"/>
    <property type="molecule type" value="Genomic_DNA"/>
</dbReference>
<dbReference type="EMBL" id="EF598699">
    <property type="protein sequence ID" value="ABR09135.1"/>
    <property type="molecule type" value="Genomic_DNA"/>
</dbReference>
<dbReference type="EMBL" id="EF598700">
    <property type="protein sequence ID" value="ABR09136.1"/>
    <property type="molecule type" value="Genomic_DNA"/>
</dbReference>
<dbReference type="EMBL" id="EF598701">
    <property type="protein sequence ID" value="ABR09137.1"/>
    <property type="molecule type" value="Genomic_DNA"/>
</dbReference>
<dbReference type="EMBL" id="EF598702">
    <property type="protein sequence ID" value="ABR09138.1"/>
    <property type="molecule type" value="Genomic_DNA"/>
</dbReference>
<dbReference type="EMBL" id="EF598703">
    <property type="protein sequence ID" value="ABR09139.1"/>
    <property type="molecule type" value="Genomic_DNA"/>
</dbReference>
<dbReference type="EMBL" id="EF598704">
    <property type="protein sequence ID" value="ABR09140.1"/>
    <property type="molecule type" value="Genomic_DNA"/>
</dbReference>
<dbReference type="EMBL" id="EF598705">
    <property type="protein sequence ID" value="ABR09141.1"/>
    <property type="molecule type" value="Genomic_DNA"/>
</dbReference>
<dbReference type="EMBL" id="EF598706">
    <property type="protein sequence ID" value="ABR09142.1"/>
    <property type="molecule type" value="Genomic_DNA"/>
</dbReference>
<dbReference type="RefSeq" id="NP_200877.1">
    <property type="nucleotide sequence ID" value="NM_125462.4"/>
</dbReference>
<dbReference type="SMR" id="Q9SE43"/>
<dbReference type="BioGRID" id="21434">
    <property type="interactions" value="5"/>
</dbReference>
<dbReference type="FunCoup" id="Q9SE43">
    <property type="interactions" value="1280"/>
</dbReference>
<dbReference type="IntAct" id="Q9SE43">
    <property type="interactions" value="3"/>
</dbReference>
<dbReference type="STRING" id="3702.Q9SE43"/>
<dbReference type="PaxDb" id="3702-AT5G60690.1"/>
<dbReference type="ProteomicsDB" id="236853"/>
<dbReference type="EnsemblPlants" id="AT5G60690.1">
    <property type="protein sequence ID" value="AT5G60690.1"/>
    <property type="gene ID" value="AT5G60690"/>
</dbReference>
<dbReference type="GeneID" id="836190"/>
<dbReference type="Gramene" id="AT5G60690.1">
    <property type="protein sequence ID" value="AT5G60690.1"/>
    <property type="gene ID" value="AT5G60690"/>
</dbReference>
<dbReference type="KEGG" id="ath:AT5G60690"/>
<dbReference type="Araport" id="AT5G60690"/>
<dbReference type="TAIR" id="AT5G60690">
    <property type="gene designation" value="REV"/>
</dbReference>
<dbReference type="eggNOG" id="ENOG502QRJM">
    <property type="taxonomic scope" value="Eukaryota"/>
</dbReference>
<dbReference type="HOGENOM" id="CLU_012517_0_0_1"/>
<dbReference type="InParanoid" id="Q9SE43"/>
<dbReference type="OMA" id="WSLINCD"/>
<dbReference type="PhylomeDB" id="Q9SE43"/>
<dbReference type="PRO" id="PR:Q9SE43"/>
<dbReference type="Proteomes" id="UP000006548">
    <property type="component" value="Chromosome 5"/>
</dbReference>
<dbReference type="ExpressionAtlas" id="Q9SE43">
    <property type="expression patterns" value="baseline and differential"/>
</dbReference>
<dbReference type="GO" id="GO:0005634">
    <property type="term" value="C:nucleus"/>
    <property type="evidence" value="ECO:0000314"/>
    <property type="project" value="TAIR"/>
</dbReference>
<dbReference type="GO" id="GO:0003700">
    <property type="term" value="F:DNA-binding transcription factor activity"/>
    <property type="evidence" value="ECO:0000250"/>
    <property type="project" value="TAIR"/>
</dbReference>
<dbReference type="GO" id="GO:0008289">
    <property type="term" value="F:lipid binding"/>
    <property type="evidence" value="ECO:0007669"/>
    <property type="project" value="InterPro"/>
</dbReference>
<dbReference type="GO" id="GO:0000976">
    <property type="term" value="F:transcription cis-regulatory region binding"/>
    <property type="evidence" value="ECO:0000353"/>
    <property type="project" value="TAIR"/>
</dbReference>
<dbReference type="GO" id="GO:0030154">
    <property type="term" value="P:cell differentiation"/>
    <property type="evidence" value="ECO:0000315"/>
    <property type="project" value="TAIR"/>
</dbReference>
<dbReference type="GO" id="GO:0009855">
    <property type="term" value="P:determination of bilateral symmetry"/>
    <property type="evidence" value="ECO:0000315"/>
    <property type="project" value="TAIR"/>
</dbReference>
<dbReference type="GO" id="GO:0010014">
    <property type="term" value="P:meristem initiation"/>
    <property type="evidence" value="ECO:0000315"/>
    <property type="project" value="TAIR"/>
</dbReference>
<dbReference type="GO" id="GO:0009944">
    <property type="term" value="P:polarity specification of adaxial/abaxial axis"/>
    <property type="evidence" value="ECO:0000315"/>
    <property type="project" value="UniProtKB"/>
</dbReference>
<dbReference type="GO" id="GO:0009956">
    <property type="term" value="P:radial pattern formation"/>
    <property type="evidence" value="ECO:0000315"/>
    <property type="project" value="TAIR"/>
</dbReference>
<dbReference type="GO" id="GO:0010051">
    <property type="term" value="P:xylem and phloem pattern formation"/>
    <property type="evidence" value="ECO:0000315"/>
    <property type="project" value="TAIR"/>
</dbReference>
<dbReference type="GO" id="GO:0010089">
    <property type="term" value="P:xylem development"/>
    <property type="evidence" value="ECO:0000315"/>
    <property type="project" value="TAIR"/>
</dbReference>
<dbReference type="CDD" id="cd14686">
    <property type="entry name" value="bZIP"/>
    <property type="match status" value="1"/>
</dbReference>
<dbReference type="CDD" id="cd00086">
    <property type="entry name" value="homeodomain"/>
    <property type="match status" value="1"/>
</dbReference>
<dbReference type="CDD" id="cd08875">
    <property type="entry name" value="START_ArGLABRA2_like"/>
    <property type="match status" value="1"/>
</dbReference>
<dbReference type="FunFam" id="3.30.530.20:FF:000020">
    <property type="entry name" value="homeobox-leucine zipper protein ATHB-15"/>
    <property type="match status" value="1"/>
</dbReference>
<dbReference type="FunFam" id="1.10.10.60:FF:000197">
    <property type="entry name" value="Homeobox-leucine zipper protein REVOLUTA"/>
    <property type="match status" value="1"/>
</dbReference>
<dbReference type="Gene3D" id="3.30.530.20">
    <property type="match status" value="1"/>
</dbReference>
<dbReference type="Gene3D" id="1.10.10.60">
    <property type="entry name" value="Homeodomain-like"/>
    <property type="match status" value="1"/>
</dbReference>
<dbReference type="InterPro" id="IPR001356">
    <property type="entry name" value="HD"/>
</dbReference>
<dbReference type="InterPro" id="IPR044830">
    <property type="entry name" value="HD-Zip_III"/>
</dbReference>
<dbReference type="InterPro" id="IPR009057">
    <property type="entry name" value="Homeodomain-like_sf"/>
</dbReference>
<dbReference type="InterPro" id="IPR013978">
    <property type="entry name" value="MEKHLA"/>
</dbReference>
<dbReference type="InterPro" id="IPR023393">
    <property type="entry name" value="START-like_dom_sf"/>
</dbReference>
<dbReference type="InterPro" id="IPR002913">
    <property type="entry name" value="START_lipid-bd_dom"/>
</dbReference>
<dbReference type="PANTHER" id="PTHR45950">
    <property type="entry name" value="HOMEOBOX-LEUCINE ZIPPER PROTEIN ATHB-14"/>
    <property type="match status" value="1"/>
</dbReference>
<dbReference type="PANTHER" id="PTHR45950:SF10">
    <property type="entry name" value="HOMEOBOX-LEUCINE ZIPPER PROTEIN REVOLUTA"/>
    <property type="match status" value="1"/>
</dbReference>
<dbReference type="Pfam" id="PF00046">
    <property type="entry name" value="Homeodomain"/>
    <property type="match status" value="1"/>
</dbReference>
<dbReference type="Pfam" id="PF08670">
    <property type="entry name" value="MEKHLA"/>
    <property type="match status" value="1"/>
</dbReference>
<dbReference type="Pfam" id="PF01852">
    <property type="entry name" value="START"/>
    <property type="match status" value="1"/>
</dbReference>
<dbReference type="SMART" id="SM00389">
    <property type="entry name" value="HOX"/>
    <property type="match status" value="1"/>
</dbReference>
<dbReference type="SMART" id="SM00234">
    <property type="entry name" value="START"/>
    <property type="match status" value="1"/>
</dbReference>
<dbReference type="SUPFAM" id="SSF55961">
    <property type="entry name" value="Bet v1-like"/>
    <property type="match status" value="1"/>
</dbReference>
<dbReference type="SUPFAM" id="SSF46689">
    <property type="entry name" value="Homeodomain-like"/>
    <property type="match status" value="1"/>
</dbReference>
<dbReference type="PROSITE" id="PS50071">
    <property type="entry name" value="HOMEOBOX_2"/>
    <property type="match status" value="1"/>
</dbReference>
<dbReference type="PROSITE" id="PS50848">
    <property type="entry name" value="START"/>
    <property type="match status" value="1"/>
</dbReference>
<sequence length="842" mass="92438">MEMAVANHRERSSDSMNRHLDSSGKYVRYTAEQVEALERVYAECPKPSSLRRQQLIRECSILANIEPKQIKVWFQNRRCRDKQRKEASRLQSVNRKLSAMNKLLMEENDRLQKQVSQLVCENGYMKQQLTTVVNDPSCESVVTTPQHSLRDANSPAGLLSIAEETLAEFLSKATGTAVDWVQMPGMKPGPDSVGIFAISQRCNGVAARACGLVSLEPMKIAEILKDRPSWFRDCRSLEVFTMFPAGNGGTIELVYMQTYAPTTLAPARDFWTLRYTTSLDNGSFVVCERSLSGSGAGPNAASASQFVRAEMLSSGYLIRPCDGGGSIIHIVDHLNLEAWSVPDVLRPLYESSKVVAQKMTISALRYIRQLAQESNGEVVYGLGRQPAVLRTFSQRLSRGFNDAVNGFGDDGWSTMHCDGAEDIIVAINSTKHLNNISNSLSFLGGVLCAKASMLLQNVPPAVLIRFLREHRSEWADFNVDAYSAATLKAGSFAYPGMRPTRFTGSQIIMPLGHTIEHEEMLEVVRLEGHSLAQEDAFMSRDVHLLQICTGIDENAVGACSELIFAPINEMFPDDAPLVPSGFRVIPVDAKTGDVQDLLTANHRTLDLTSSLEVGPSPENASGNSFSSSSSRCILTIAFQFPFENNLQENVAGMACQYVRSVISSVQRVAMAISPSGISPSLGSKLSPGSPEAVTLAQWISQSYSHHLGSELLTIDSLGSDDSVLKLLWDHQDAILCCSLKPQPVFMFANQAGLDMLETTLVALQDITLEKIFDESGRKAICSDFAKLMQQGFACLPSGICVSTMGRHVSYEQAVAWKVFAASEENNNNLHCLAFSFVNWSFV</sequence>
<protein>
    <recommendedName>
        <fullName evidence="20">Homeobox-leucine zipper protein REVOLUTA</fullName>
    </recommendedName>
    <alternativeName>
        <fullName evidence="20">HD-ZIP protein REV</fullName>
    </alternativeName>
    <alternativeName>
        <fullName evidence="20">Homeodomain transcription factor REV</fullName>
    </alternativeName>
    <alternativeName>
        <fullName evidence="19">Protein AMPHIVASAL VASCULAR BUNDLE 1</fullName>
    </alternativeName>
    <alternativeName>
        <fullName evidence="18">Protein INTERFASCICULAR FIBERLESS 1</fullName>
    </alternativeName>
</protein>
<organism>
    <name type="scientific">Arabidopsis thaliana</name>
    <name type="common">Mouse-ear cress</name>
    <dbReference type="NCBI Taxonomy" id="3702"/>
    <lineage>
        <taxon>Eukaryota</taxon>
        <taxon>Viridiplantae</taxon>
        <taxon>Streptophyta</taxon>
        <taxon>Embryophyta</taxon>
        <taxon>Tracheophyta</taxon>
        <taxon>Spermatophyta</taxon>
        <taxon>Magnoliopsida</taxon>
        <taxon>eudicotyledons</taxon>
        <taxon>Gunneridae</taxon>
        <taxon>Pentapetalae</taxon>
        <taxon>rosids</taxon>
        <taxon>malvids</taxon>
        <taxon>Brassicales</taxon>
        <taxon>Brassicaceae</taxon>
        <taxon>Camelineae</taxon>
        <taxon>Arabidopsis</taxon>
    </lineage>
</organism>
<feature type="chain" id="PRO_0000331736" description="Homeobox-leucine zipper protein REVOLUTA">
    <location>
        <begin position="1"/>
        <end position="842"/>
    </location>
</feature>
<feature type="domain" description="START" evidence="3">
    <location>
        <begin position="151"/>
        <end position="379"/>
    </location>
</feature>
<feature type="DNA-binding region" description="Homeobox" evidence="2">
    <location>
        <begin position="22"/>
        <end position="85"/>
    </location>
</feature>
<feature type="region of interest" description="Disordered" evidence="4">
    <location>
        <begin position="1"/>
        <end position="20"/>
    </location>
</feature>
<feature type="coiled-coil region" evidence="1">
    <location>
        <begin position="90"/>
        <end position="121"/>
    </location>
</feature>
<feature type="compositionally biased region" description="Basic and acidic residues" evidence="4">
    <location>
        <begin position="7"/>
        <end position="20"/>
    </location>
</feature>
<feature type="sequence variant" description="In strain: cv. Ag-0." evidence="12">
    <original>SF</original>
    <variation>TS</variation>
    <location>
        <begin position="624"/>
        <end position="625"/>
    </location>
</feature>
<feature type="sequence variant" description="In strain: cv. C24." evidence="12">
    <original>FSS</original>
    <variation>SSI</variation>
    <location>
        <begin position="625"/>
        <end position="627"/>
    </location>
</feature>
<feature type="sequence variant" description="In strain: cv. Br-0, cv. Ct-1, cv. Edi-0, cv. Ga-0, cv. Landsberg erecta, cv. Ll-0, cv. Lz-0, cv. Ms-0, cv. Sorbo, cv. Tu-1, cv. Wa-1 and cv. Wassilewskija." evidence="12">
    <original>F</original>
    <variation>S</variation>
    <location>
        <position position="625"/>
    </location>
</feature>
<feature type="sequence variant" description="In strain: cv. Nd-1." evidence="12">
    <original>S</original>
    <variation>L</variation>
    <location>
        <position position="630"/>
    </location>
</feature>
<feature type="mutagenesis site" description="In avb1; gain of function. Transformation of the collateral vascular bundles into amphivasal bundles and disruption of the ring-like arrangement of vascular bundles in the stele." evidence="8">
    <original>P</original>
    <variation>L</variation>
    <location>
        <position position="190"/>
    </location>
</feature>
<comment type="function">
    <text evidence="5 6 7 8 9 15 16 17">Probable transcription factor involved in the regulation of interfascicular fiber (cortical cells) and secondary xylem differentiation in the inflorescence stems. Required for lateral shoot meristems (LSMs) and flower meristems (FMs) initiation. May be involved in the determination of vascular patterning and organ polarity (PubMed:10559440, PubMed:11169198, PubMed:11402186, PubMed:15111711, PubMed:15598805, PubMed:7555701). Directly regulates the expression of AGO10, ZPR1, ZPR2, ZPR3 and ZPR4 (PubMed:22781836). Required to regulate adaxial-abaxial polarity and leaf axial patterning (PubMed:20807212).</text>
</comment>
<comment type="subunit">
    <text evidence="11 13 14 22">Homodimer (Probable). Heterodimer with ZPR1, ZPR2, ZPR3 or ZPR4 (PubMed:18055602). Interacts with ESR1 and ESR2 (PubMed:17376809). Interacts with ZPR1, ZPR2, ZPR3 and ZPR4 (PubMed:18055602, PubMed:18408069). Heterodimerization with ZPR3 prevents DNA binding by REV (PubMed:18055602).</text>
</comment>
<comment type="interaction">
    <interactant intactId="EBI-3134035">
        <id>Q9SE43</id>
    </interactant>
    <interactant intactId="EBI-4426557">
        <id>Q84MB2</id>
        <label>TIFY8</label>
    </interactant>
    <organismsDiffer>false</organismsDiffer>
    <experiments>3</experiments>
</comment>
<comment type="subcellular location">
    <subcellularLocation>
        <location evidence="2 5">Nucleus</location>
    </subcellularLocation>
</comment>
<comment type="tissue specificity">
    <text evidence="5">Expressed in the interfascicular regions of stem and vascular bundles of young roots and leaves.</text>
</comment>
<comment type="developmental stage">
    <text evidence="6">Expressed at the earliest stages and throughout LSM initiation and development. In embryo development, expressed at the heart stage until the 'walking stick' stage in the adaxial portion of the cotyledon primordia, the shoot apical meristem (SAM) and the vascular precursor cells of the hypocotyl and root. In developing flowers, expressed first at stage 1 in the center of L3 layer and then expands to the center of L2 and L1 layers. Expressed in the center of flower meristem through stages 4 and 5. At stage 6, expressed in the adaxial side of the carpel primordia and then on the adaxial carpel face.</text>
</comment>
<comment type="induction">
    <text evidence="8 10 15">By auxin. Repressed by ZPR and miR165. Induced by DOF5.1 (PubMed:20807212).</text>
</comment>
<comment type="disruption phenotype">
    <text evidence="7 15">Plants display strongly reduced auxin polar transport in inflorescence stems and hypocotyls. This phenotype is probably due to altered cell differentiation and morphology (PubMed:11402186). Repression by miR165 suppresses DOF5.1 over-expression mediated upward-curling phenotype (PubMed:20807212).</text>
</comment>
<comment type="similarity">
    <text evidence="21">Belongs to the HD-ZIP homeobox family. Class III subfamily.</text>
</comment>
<name>REV_ARATH</name>